<feature type="chain" id="PRO_0000458442" description="Probable type 3 secretion system regulator AscH">
    <location>
        <begin position="1"/>
        <end position="184"/>
    </location>
</feature>
<feature type="region of interest" description="Disordered" evidence="2">
    <location>
        <begin position="1"/>
        <end position="25"/>
    </location>
</feature>
<protein>
    <recommendedName>
        <fullName evidence="6">Probable type 3 secretion system regulator AscH</fullName>
        <shortName evidence="6">T3SS regulator AscH</shortName>
    </recommendedName>
    <alternativeName>
        <fullName evidence="6">Aeromonas secretion protein H</fullName>
    </alternativeName>
</protein>
<dbReference type="EMBL" id="AJ616218">
    <property type="protein sequence ID" value="CAE83122.1"/>
    <property type="molecule type" value="Genomic_DNA"/>
</dbReference>
<dbReference type="EMBL" id="LMTT01000054">
    <property type="protein sequence ID" value="PJZ12829.1"/>
    <property type="molecule type" value="Genomic_DNA"/>
</dbReference>
<dbReference type="EMBL" id="KY555069">
    <property type="protein sequence ID" value="ASD49247.1"/>
    <property type="molecule type" value="Genomic_DNA"/>
</dbReference>
<dbReference type="EMBL" id="CP048224">
    <property type="protein sequence ID" value="QHU98328.1"/>
    <property type="molecule type" value="Genomic_DNA"/>
</dbReference>
<dbReference type="RefSeq" id="WP_005320804.1">
    <property type="nucleotide sequence ID" value="NZ_MIIU01000070.1"/>
</dbReference>
<dbReference type="SMR" id="Q4W470"/>
<dbReference type="OMA" id="IPRNGMV"/>
<dbReference type="GO" id="GO:0005576">
    <property type="term" value="C:extracellular region"/>
    <property type="evidence" value="ECO:0007669"/>
    <property type="project" value="UniProtKB-SubCell"/>
</dbReference>
<dbReference type="GO" id="GO:0030257">
    <property type="term" value="C:type III protein secretion system complex"/>
    <property type="evidence" value="ECO:0007669"/>
    <property type="project" value="InterPro"/>
</dbReference>
<dbReference type="GO" id="GO:0030254">
    <property type="term" value="P:protein secretion by the type III secretion system"/>
    <property type="evidence" value="ECO:0007669"/>
    <property type="project" value="InterPro"/>
</dbReference>
<dbReference type="Gene3D" id="1.10.10.1000">
    <property type="entry name" value="Type III secretion system virulence factor YopR, core domain"/>
    <property type="match status" value="1"/>
</dbReference>
<dbReference type="InterPro" id="IPR013349">
    <property type="entry name" value="T3SS_YopR"/>
</dbReference>
<dbReference type="InterPro" id="IPR041814">
    <property type="entry name" value="YopR_core"/>
</dbReference>
<dbReference type="NCBIfam" id="TIGR02509">
    <property type="entry name" value="type_III_yopR"/>
    <property type="match status" value="1"/>
</dbReference>
<dbReference type="Pfam" id="PF09025">
    <property type="entry name" value="T3SS_needle_reg"/>
    <property type="match status" value="1"/>
</dbReference>
<dbReference type="SUPFAM" id="SSF140591">
    <property type="entry name" value="Type III secretion system domain"/>
    <property type="match status" value="1"/>
</dbReference>
<reference evidence="9" key="1">
    <citation type="journal article" date="2005" name="Microbiology">
        <title>Attenuated virulence of an Aeromonas salmonicida subsp. salmonicida type III secretion mutant in a rainbow trout model.</title>
        <authorList>
            <person name="Burr S.E."/>
            <person name="Pugovkin D."/>
            <person name="Wahli T."/>
            <person name="Segner H."/>
            <person name="Frey J."/>
        </authorList>
    </citation>
    <scope>NUCLEOTIDE SEQUENCE [GENOMIC DNA]</scope>
    <source>
        <strain>JF2267</strain>
    </source>
</reference>
<reference evidence="10" key="2">
    <citation type="submission" date="2015-10" db="EMBL/GenBank/DDBJ databases">
        <title>Draft genome sequence of Aeromonas salmonicida subsp. salmonicida reveals a plasticity of AsaGEI2a.</title>
        <authorList>
            <person name="Vincent A.T."/>
            <person name="Emond-Rheault J.-G."/>
            <person name="Charette S.J."/>
        </authorList>
    </citation>
    <scope>NUCLEOTIDE SEQUENCE [LARGE SCALE GENOMIC DNA]</scope>
    <source>
        <strain>M22710-11</strain>
    </source>
</reference>
<reference evidence="8" key="3">
    <citation type="submission" date="2017-01" db="EMBL/GenBank/DDBJ databases">
        <title>Plasmid composition in Aeromonas salmonicida subsp. salmonicida 01-B526 unravels unsuspected type three secretion system loss patterns.</title>
        <authorList>
            <person name="Tanaka K.H."/>
            <person name="Vincent A.T."/>
            <person name="Emond-Rheault J.-G."/>
            <person name="Adamczuk M."/>
            <person name="Frenette M."/>
            <person name="Charette S.J."/>
        </authorList>
    </citation>
    <scope>NUCLEOTIDE SEQUENCE [LARGE SCALE GENOMIC DNA]</scope>
    <source>
        <strain>01-B526</strain>
        <plasmid>pAsa5</plasmid>
    </source>
</reference>
<reference evidence="11" key="4">
    <citation type="submission" date="2020-01" db="EMBL/GenBank/DDBJ databases">
        <title>Aeromonas salmonicida J223 completed genome.</title>
        <authorList>
            <person name="Santander J."/>
            <person name="Valderrama K."/>
            <person name="Vasquez I."/>
            <person name="Segovia C."/>
            <person name="Hossain A."/>
            <person name="Cipriano R."/>
            <person name="Gnanagobal H."/>
        </authorList>
    </citation>
    <scope>NUCLEOTIDE SEQUENCE [LARGE SCALE GENOMIC DNA]</scope>
    <source>
        <strain>J223</strain>
        <plasmid>pASal5</plasmid>
    </source>
</reference>
<reference key="5">
    <citation type="journal article" date="2014" name="Microb. Biotechnol.">
        <title>Aeromonas salmonicida subsp. salmonicida in the light of its type-three secretion system.</title>
        <authorList>
            <person name="Vanden Bergh P."/>
            <person name="Frey J."/>
        </authorList>
    </citation>
    <scope>PROBABLE FUNCTION</scope>
    <scope>GENETIC ORGANIZATION</scope>
    <scope>REVIEW</scope>
</reference>
<organism>
    <name type="scientific">Aeromonas salmonicida subsp. salmonicida</name>
    <dbReference type="NCBI Taxonomy" id="29491"/>
    <lineage>
        <taxon>Bacteria</taxon>
        <taxon>Pseudomonadati</taxon>
        <taxon>Pseudomonadota</taxon>
        <taxon>Gammaproteobacteria</taxon>
        <taxon>Aeromonadales</taxon>
        <taxon>Aeromonadaceae</taxon>
        <taxon>Aeromonas</taxon>
    </lineage>
</organism>
<sequence length="184" mass="20658">MKIEGSDQLGGEQPQRQPLPPESMAQRQLERLLAKAPESDLFERWQQGAPLEGLLAVVAPAAKRELLWQIYQQGNKPAPEIGKQLFAPVTDKLIARFGERQSPVLDAIDLPELRATMREFDPLASRREKVLLNLLSELRDGQGAVPAEHLFLDALARRELMTLIPLNGMVDNLMRNSHKLDLEA</sequence>
<name>ASCH_AERSS</name>
<evidence type="ECO:0000250" key="1">
    <source>
        <dbReference type="UniProtKB" id="Q01249"/>
    </source>
</evidence>
<evidence type="ECO:0000256" key="2">
    <source>
        <dbReference type="SAM" id="MobiDB-lite"/>
    </source>
</evidence>
<evidence type="ECO:0000269" key="3">
    <source>
    </source>
</evidence>
<evidence type="ECO:0000269" key="4">
    <source>
    </source>
</evidence>
<evidence type="ECO:0000303" key="5">
    <source>
    </source>
</evidence>
<evidence type="ECO:0000305" key="6"/>
<evidence type="ECO:0000305" key="7">
    <source>
    </source>
</evidence>
<evidence type="ECO:0000312" key="8">
    <source>
        <dbReference type="EMBL" id="ASD49247.1"/>
    </source>
</evidence>
<evidence type="ECO:0000312" key="9">
    <source>
        <dbReference type="EMBL" id="CAE83122.1"/>
    </source>
</evidence>
<evidence type="ECO:0000312" key="10">
    <source>
        <dbReference type="EMBL" id="PJZ12829.1"/>
    </source>
</evidence>
<evidence type="ECO:0000312" key="11">
    <source>
        <dbReference type="EMBL" id="QHU98328.1"/>
    </source>
</evidence>
<geneLocation type="plasmid" evidence="11">
    <name>pASal5</name>
</geneLocation>
<geneLocation type="plasmid" evidence="8">
    <name>pAsa5</name>
</geneLocation>
<proteinExistence type="evidence at transcript level"/>
<gene>
    <name evidence="5" type="primary">ascH</name>
    <name evidence="10" type="ORF">ASJ32_20170</name>
    <name evidence="11" type="ORF">AXA69_022190</name>
</gene>
<comment type="function">
    <text evidence="7">May be involved in the regulation of the assembly of the type III secretion system (T3SS), also called injectisome, which is used to inject bacterial effector proteins into eukaryotic host cells (Probable). May control the polymerization of the needle (Probable).</text>
</comment>
<comment type="subcellular location">
    <subcellularLocation>
        <location evidence="1">Secreted</location>
    </subcellularLocation>
    <text evidence="1">Secreted via the type III secretion system (T3SS).</text>
</comment>
<comment type="induction">
    <text evidence="3 4">Part of a gene cluster encoding T3SS structural components.</text>
</comment>
<comment type="similarity">
    <text evidence="6">Belongs to the YopR family.</text>
</comment>
<accession>Q4W470</accession>
<keyword id="KW-0614">Plasmid</keyword>
<keyword id="KW-0964">Secreted</keyword>
<keyword id="KW-0843">Virulence</keyword>